<protein>
    <recommendedName>
        <fullName evidence="1">Polyribonucleotide nucleotidyltransferase</fullName>
        <ecNumber evidence="1">2.7.7.8</ecNumber>
    </recommendedName>
    <alternativeName>
        <fullName evidence="1">Polynucleotide phosphorylase</fullName>
        <shortName evidence="1">PNPase</shortName>
    </alternativeName>
</protein>
<dbReference type="EC" id="2.7.7.8" evidence="1"/>
<dbReference type="EMBL" id="AE017321">
    <property type="protein sequence ID" value="AAW70611.1"/>
    <property type="molecule type" value="Genomic_DNA"/>
</dbReference>
<dbReference type="RefSeq" id="WP_011256221.1">
    <property type="nucleotide sequence ID" value="NC_006833.1"/>
</dbReference>
<dbReference type="SMR" id="Q5GTR3"/>
<dbReference type="STRING" id="292805.Wbm0019"/>
<dbReference type="KEGG" id="wbm:Wbm0019"/>
<dbReference type="eggNOG" id="COG1185">
    <property type="taxonomic scope" value="Bacteria"/>
</dbReference>
<dbReference type="HOGENOM" id="CLU_004217_2_2_5"/>
<dbReference type="Proteomes" id="UP000000534">
    <property type="component" value="Chromosome"/>
</dbReference>
<dbReference type="GO" id="GO:0005829">
    <property type="term" value="C:cytosol"/>
    <property type="evidence" value="ECO:0007669"/>
    <property type="project" value="TreeGrafter"/>
</dbReference>
<dbReference type="GO" id="GO:0000175">
    <property type="term" value="F:3'-5'-RNA exonuclease activity"/>
    <property type="evidence" value="ECO:0007669"/>
    <property type="project" value="TreeGrafter"/>
</dbReference>
<dbReference type="GO" id="GO:0000287">
    <property type="term" value="F:magnesium ion binding"/>
    <property type="evidence" value="ECO:0007669"/>
    <property type="project" value="UniProtKB-UniRule"/>
</dbReference>
<dbReference type="GO" id="GO:0004654">
    <property type="term" value="F:polyribonucleotide nucleotidyltransferase activity"/>
    <property type="evidence" value="ECO:0007669"/>
    <property type="project" value="UniProtKB-UniRule"/>
</dbReference>
<dbReference type="GO" id="GO:0003723">
    <property type="term" value="F:RNA binding"/>
    <property type="evidence" value="ECO:0007669"/>
    <property type="project" value="UniProtKB-UniRule"/>
</dbReference>
<dbReference type="GO" id="GO:0006402">
    <property type="term" value="P:mRNA catabolic process"/>
    <property type="evidence" value="ECO:0007669"/>
    <property type="project" value="UniProtKB-UniRule"/>
</dbReference>
<dbReference type="GO" id="GO:0006396">
    <property type="term" value="P:RNA processing"/>
    <property type="evidence" value="ECO:0007669"/>
    <property type="project" value="InterPro"/>
</dbReference>
<dbReference type="CDD" id="cd02393">
    <property type="entry name" value="KH-I_PNPase"/>
    <property type="match status" value="1"/>
</dbReference>
<dbReference type="CDD" id="cd11363">
    <property type="entry name" value="RNase_PH_PNPase_1"/>
    <property type="match status" value="1"/>
</dbReference>
<dbReference type="CDD" id="cd11364">
    <property type="entry name" value="RNase_PH_PNPase_2"/>
    <property type="match status" value="1"/>
</dbReference>
<dbReference type="FunFam" id="3.30.1370.10:FF:000001">
    <property type="entry name" value="Polyribonucleotide nucleotidyltransferase"/>
    <property type="match status" value="1"/>
</dbReference>
<dbReference type="FunFam" id="3.30.230.70:FF:000001">
    <property type="entry name" value="Polyribonucleotide nucleotidyltransferase"/>
    <property type="match status" value="1"/>
</dbReference>
<dbReference type="FunFam" id="3.30.230.70:FF:000002">
    <property type="entry name" value="Polyribonucleotide nucleotidyltransferase"/>
    <property type="match status" value="1"/>
</dbReference>
<dbReference type="Gene3D" id="3.30.230.70">
    <property type="entry name" value="GHMP Kinase, N-terminal domain"/>
    <property type="match status" value="2"/>
</dbReference>
<dbReference type="Gene3D" id="3.30.1370.10">
    <property type="entry name" value="K Homology domain, type 1"/>
    <property type="match status" value="1"/>
</dbReference>
<dbReference type="Gene3D" id="2.40.50.140">
    <property type="entry name" value="Nucleic acid-binding proteins"/>
    <property type="match status" value="1"/>
</dbReference>
<dbReference type="HAMAP" id="MF_01595">
    <property type="entry name" value="PNPase"/>
    <property type="match status" value="1"/>
</dbReference>
<dbReference type="InterPro" id="IPR001247">
    <property type="entry name" value="ExoRNase_PH_dom1"/>
</dbReference>
<dbReference type="InterPro" id="IPR015847">
    <property type="entry name" value="ExoRNase_PH_dom2"/>
</dbReference>
<dbReference type="InterPro" id="IPR036345">
    <property type="entry name" value="ExoRNase_PH_dom2_sf"/>
</dbReference>
<dbReference type="InterPro" id="IPR004087">
    <property type="entry name" value="KH_dom"/>
</dbReference>
<dbReference type="InterPro" id="IPR004088">
    <property type="entry name" value="KH_dom_type_1"/>
</dbReference>
<dbReference type="InterPro" id="IPR036612">
    <property type="entry name" value="KH_dom_type_1_sf"/>
</dbReference>
<dbReference type="InterPro" id="IPR012340">
    <property type="entry name" value="NA-bd_OB-fold"/>
</dbReference>
<dbReference type="InterPro" id="IPR012162">
    <property type="entry name" value="PNPase"/>
</dbReference>
<dbReference type="InterPro" id="IPR027408">
    <property type="entry name" value="PNPase/RNase_PH_dom_sf"/>
</dbReference>
<dbReference type="InterPro" id="IPR015848">
    <property type="entry name" value="PNPase_PH_RNA-bd_bac/org-type"/>
</dbReference>
<dbReference type="InterPro" id="IPR036456">
    <property type="entry name" value="PNPase_PH_RNA-bd_sf"/>
</dbReference>
<dbReference type="InterPro" id="IPR020568">
    <property type="entry name" value="Ribosomal_Su5_D2-typ_SF"/>
</dbReference>
<dbReference type="InterPro" id="IPR003029">
    <property type="entry name" value="S1_domain"/>
</dbReference>
<dbReference type="NCBIfam" id="TIGR03591">
    <property type="entry name" value="polynuc_phos"/>
    <property type="match status" value="1"/>
</dbReference>
<dbReference type="NCBIfam" id="NF008805">
    <property type="entry name" value="PRK11824.1"/>
    <property type="match status" value="1"/>
</dbReference>
<dbReference type="PANTHER" id="PTHR11252">
    <property type="entry name" value="POLYRIBONUCLEOTIDE NUCLEOTIDYLTRANSFERASE"/>
    <property type="match status" value="1"/>
</dbReference>
<dbReference type="PANTHER" id="PTHR11252:SF0">
    <property type="entry name" value="POLYRIBONUCLEOTIDE NUCLEOTIDYLTRANSFERASE 1, MITOCHONDRIAL"/>
    <property type="match status" value="1"/>
</dbReference>
<dbReference type="Pfam" id="PF00013">
    <property type="entry name" value="KH_1"/>
    <property type="match status" value="1"/>
</dbReference>
<dbReference type="Pfam" id="PF03726">
    <property type="entry name" value="PNPase"/>
    <property type="match status" value="1"/>
</dbReference>
<dbReference type="Pfam" id="PF01138">
    <property type="entry name" value="RNase_PH"/>
    <property type="match status" value="2"/>
</dbReference>
<dbReference type="Pfam" id="PF03725">
    <property type="entry name" value="RNase_PH_C"/>
    <property type="match status" value="2"/>
</dbReference>
<dbReference type="Pfam" id="PF00575">
    <property type="entry name" value="S1"/>
    <property type="match status" value="1"/>
</dbReference>
<dbReference type="PIRSF" id="PIRSF005499">
    <property type="entry name" value="PNPase"/>
    <property type="match status" value="1"/>
</dbReference>
<dbReference type="SMART" id="SM00322">
    <property type="entry name" value="KH"/>
    <property type="match status" value="1"/>
</dbReference>
<dbReference type="SMART" id="SM00316">
    <property type="entry name" value="S1"/>
    <property type="match status" value="1"/>
</dbReference>
<dbReference type="SUPFAM" id="SSF54791">
    <property type="entry name" value="Eukaryotic type KH-domain (KH-domain type I)"/>
    <property type="match status" value="1"/>
</dbReference>
<dbReference type="SUPFAM" id="SSF50249">
    <property type="entry name" value="Nucleic acid-binding proteins"/>
    <property type="match status" value="1"/>
</dbReference>
<dbReference type="SUPFAM" id="SSF46915">
    <property type="entry name" value="Polynucleotide phosphorylase/guanosine pentaphosphate synthase (PNPase/GPSI), domain 3"/>
    <property type="match status" value="1"/>
</dbReference>
<dbReference type="SUPFAM" id="SSF55666">
    <property type="entry name" value="Ribonuclease PH domain 2-like"/>
    <property type="match status" value="2"/>
</dbReference>
<dbReference type="SUPFAM" id="SSF54211">
    <property type="entry name" value="Ribosomal protein S5 domain 2-like"/>
    <property type="match status" value="2"/>
</dbReference>
<dbReference type="PROSITE" id="PS50084">
    <property type="entry name" value="KH_TYPE_1"/>
    <property type="match status" value="1"/>
</dbReference>
<dbReference type="PROSITE" id="PS50126">
    <property type="entry name" value="S1"/>
    <property type="match status" value="1"/>
</dbReference>
<evidence type="ECO:0000255" key="1">
    <source>
        <dbReference type="HAMAP-Rule" id="MF_01595"/>
    </source>
</evidence>
<evidence type="ECO:0000256" key="2">
    <source>
        <dbReference type="SAM" id="MobiDB-lite"/>
    </source>
</evidence>
<organism>
    <name type="scientific">Wolbachia sp. subsp. Brugia malayi (strain TRS)</name>
    <dbReference type="NCBI Taxonomy" id="292805"/>
    <lineage>
        <taxon>Bacteria</taxon>
        <taxon>Pseudomonadati</taxon>
        <taxon>Pseudomonadota</taxon>
        <taxon>Alphaproteobacteria</taxon>
        <taxon>Rickettsiales</taxon>
        <taxon>Anaplasmataceae</taxon>
        <taxon>Wolbachieae</taxon>
        <taxon>Wolbachia</taxon>
    </lineage>
</organism>
<keyword id="KW-0963">Cytoplasm</keyword>
<keyword id="KW-0460">Magnesium</keyword>
<keyword id="KW-0479">Metal-binding</keyword>
<keyword id="KW-0548">Nucleotidyltransferase</keyword>
<keyword id="KW-1185">Reference proteome</keyword>
<keyword id="KW-0694">RNA-binding</keyword>
<keyword id="KW-0808">Transferase</keyword>
<name>PNP_WOLTR</name>
<gene>
    <name evidence="1" type="primary">pnp</name>
    <name type="ordered locus">Wbm0019</name>
</gene>
<proteinExistence type="inferred from homology"/>
<accession>Q5GTR3</accession>
<feature type="chain" id="PRO_0000329936" description="Polyribonucleotide nucleotidyltransferase">
    <location>
        <begin position="1"/>
        <end position="755"/>
    </location>
</feature>
<feature type="domain" description="KH" evidence="1">
    <location>
        <begin position="549"/>
        <end position="608"/>
    </location>
</feature>
<feature type="domain" description="S1 motif" evidence="1">
    <location>
        <begin position="618"/>
        <end position="686"/>
    </location>
</feature>
<feature type="region of interest" description="Disordered" evidence="2">
    <location>
        <begin position="702"/>
        <end position="755"/>
    </location>
</feature>
<feature type="compositionally biased region" description="Basic and acidic residues" evidence="2">
    <location>
        <begin position="702"/>
        <end position="714"/>
    </location>
</feature>
<feature type="compositionally biased region" description="Basic residues" evidence="2">
    <location>
        <begin position="722"/>
        <end position="731"/>
    </location>
</feature>
<feature type="binding site" evidence="1">
    <location>
        <position position="482"/>
    </location>
    <ligand>
        <name>Mg(2+)</name>
        <dbReference type="ChEBI" id="CHEBI:18420"/>
    </ligand>
</feature>
<feature type="binding site" evidence="1">
    <location>
        <position position="488"/>
    </location>
    <ligand>
        <name>Mg(2+)</name>
        <dbReference type="ChEBI" id="CHEBI:18420"/>
    </ligand>
</feature>
<sequence>MFEIIKKSIEWGGRTLSLETGKIARQADGSVVVNYGDTSILVTVVRKKKEEIVDFLPLNVQFIAKSYAMGRIPGGFFKREGKPSDRETLISRVIDRSIRPLFLEGFHDEISIVCNLLTYDTVNPPEVPALIGAVAALAISGVPFHFIIAGVLVGCDGNNNYILNPSVQEMKVSSLDLFLSGDERSILMVESEAKELPEENILNAIKFGHEHLQPVIKLIKEFADTIGNKFDSFAPIDISDIMQDLEKHSKDFEEAYSQTVKQERAQTLETIRNNILNPLKEAGKDEKLITQAVKNFERSLLRKIIREKGTRIDGRKYDEIRQIEVEVDILSRTHGSALFTRGSTQALVVTALGTTQDEQIVDDIEGDRREHFMLHYNFPSFAVGDASAIRAPGRREIGHGKLAWKAIHPVLPDKSEFPYTIRVVSEIMESDGSSSMATVCGTSLALMDTGVPIKSPVAGIAMGLIKDKNDYVILSDILGDEDYLGDMDFKVAGTSEGITALQMDMKISGISFEIVEKSLEQAKAGRLHILEKMNSVISEHSDDVKGHAPRMVSFYIDKDKISAAIGAKGKNIRSVCERSNAKIEIGDDGKVSVFAMSSAEAEIAKNMMIDSITELEQGAIVDVKVVKIDKSIVELELFNGRKGKMHISEVANQHIESIESILKQGDTFKALVIDFEKGGCPKLSRRRVDQETGDFFEGELYNEEKKDSSNDRDYYNSPFNRKSGHRKRPVHSRSSFSNRNNRPKFGNDDSSSSFY</sequence>
<reference key="1">
    <citation type="journal article" date="2005" name="PLoS Biol.">
        <title>The Wolbachia genome of Brugia malayi: endosymbiont evolution within a human pathogenic nematode.</title>
        <authorList>
            <person name="Foster J."/>
            <person name="Ganatra M."/>
            <person name="Kamal I."/>
            <person name="Ware J."/>
            <person name="Makarova K."/>
            <person name="Ivanova N."/>
            <person name="Bhattacharyya A."/>
            <person name="Kapatral V."/>
            <person name="Kumar S."/>
            <person name="Posfai J."/>
            <person name="Vincze T."/>
            <person name="Ingram J."/>
            <person name="Moran L."/>
            <person name="Lapidus A."/>
            <person name="Omelchenko M."/>
            <person name="Kyrpides N."/>
            <person name="Ghedin E."/>
            <person name="Wang S."/>
            <person name="Goltsman E."/>
            <person name="Joukov V."/>
            <person name="Ostrovskaya O."/>
            <person name="Tsukerman K."/>
            <person name="Mazur M."/>
            <person name="Comb D."/>
            <person name="Koonin E."/>
            <person name="Slatko B."/>
        </authorList>
    </citation>
    <scope>NUCLEOTIDE SEQUENCE [LARGE SCALE GENOMIC DNA]</scope>
    <source>
        <strain>TRS</strain>
    </source>
</reference>
<comment type="function">
    <text evidence="1">Involved in mRNA degradation. Catalyzes the phosphorolysis of single-stranded polyribonucleotides processively in the 3'- to 5'-direction.</text>
</comment>
<comment type="catalytic activity">
    <reaction evidence="1">
        <text>RNA(n+1) + phosphate = RNA(n) + a ribonucleoside 5'-diphosphate</text>
        <dbReference type="Rhea" id="RHEA:22096"/>
        <dbReference type="Rhea" id="RHEA-COMP:14527"/>
        <dbReference type="Rhea" id="RHEA-COMP:17342"/>
        <dbReference type="ChEBI" id="CHEBI:43474"/>
        <dbReference type="ChEBI" id="CHEBI:57930"/>
        <dbReference type="ChEBI" id="CHEBI:140395"/>
        <dbReference type="EC" id="2.7.7.8"/>
    </reaction>
</comment>
<comment type="cofactor">
    <cofactor evidence="1">
        <name>Mg(2+)</name>
        <dbReference type="ChEBI" id="CHEBI:18420"/>
    </cofactor>
</comment>
<comment type="subcellular location">
    <subcellularLocation>
        <location evidence="1">Cytoplasm</location>
    </subcellularLocation>
</comment>
<comment type="similarity">
    <text evidence="1">Belongs to the polyribonucleotide nucleotidyltransferase family.</text>
</comment>